<reference key="1">
    <citation type="submission" date="1997-02" db="EMBL/GenBank/DDBJ databases">
        <authorList>
            <person name="Lein W."/>
            <person name="Saalbach G."/>
        </authorList>
    </citation>
    <scope>NUCLEOTIDE SEQUENCE [MRNA]</scope>
    <source>
        <strain>cv. SR1</strain>
        <tissue>Leaf</tissue>
    </source>
</reference>
<sequence>MSVKELKERHMAATQTVNDLREKLKQKRLQLLDTDVSGYARSQGKTPVIFGPTDLVCCRILQGHTGKVYSLDWTPEKNRIVSASQDGRLIVWNALTSQKTHAIKLPCAWVMTCAFSPSGQSVACGGLDSVCSIFNLNSPIDKDGNHPVSRMLSGHKGYVSSCQYVPDEDTHVITSSGDQTCVLWDITTGLRTSVFGGEFQSGHTADVQSVSISSSNPRLFVSGSCDSTARLWDTRVASRAQRTFYGHEGDVNTVKFFPDGNRFGTGSDDGTCRLFDIRTGHQLQVYYQPHGDGDIPHVTSMAFSISGRLLFVGYSNGDCYVWDTLLAKVVLNLGAVQNSHEGRISCLGLSADGSALCTGSWDTNLKIWAFGGHRSVI</sequence>
<dbReference type="EMBL" id="Z84821">
    <property type="protein sequence ID" value="CAB06619.1"/>
    <property type="molecule type" value="mRNA"/>
</dbReference>
<dbReference type="PIR" id="T04089">
    <property type="entry name" value="T04089"/>
</dbReference>
<dbReference type="RefSeq" id="NP_001311627.1">
    <property type="nucleotide sequence ID" value="NM_001324698.1"/>
</dbReference>
<dbReference type="SMR" id="P93398"/>
<dbReference type="STRING" id="4097.P93398"/>
<dbReference type="PaxDb" id="4097-P93398"/>
<dbReference type="GeneID" id="107760597"/>
<dbReference type="KEGG" id="nta:107760597"/>
<dbReference type="OMA" id="SCCRFLT"/>
<dbReference type="OrthoDB" id="10255630at2759"/>
<dbReference type="PhylomeDB" id="P93398"/>
<dbReference type="Proteomes" id="UP000084051">
    <property type="component" value="Unplaced"/>
</dbReference>
<dbReference type="GO" id="GO:0005737">
    <property type="term" value="C:cytoplasm"/>
    <property type="evidence" value="ECO:0000318"/>
    <property type="project" value="GO_Central"/>
</dbReference>
<dbReference type="GO" id="GO:0005834">
    <property type="term" value="C:heterotrimeric G-protein complex"/>
    <property type="evidence" value="ECO:0000318"/>
    <property type="project" value="GO_Central"/>
</dbReference>
<dbReference type="GO" id="GO:0030159">
    <property type="term" value="F:signaling receptor complex adaptor activity"/>
    <property type="evidence" value="ECO:0000318"/>
    <property type="project" value="GO_Central"/>
</dbReference>
<dbReference type="GO" id="GO:0007186">
    <property type="term" value="P:G protein-coupled receptor signaling pathway"/>
    <property type="evidence" value="ECO:0000318"/>
    <property type="project" value="GO_Central"/>
</dbReference>
<dbReference type="CDD" id="cd00200">
    <property type="entry name" value="WD40"/>
    <property type="match status" value="1"/>
</dbReference>
<dbReference type="FunFam" id="2.130.10.10:FF:000580">
    <property type="entry name" value="Guanine nucleotide-binding protein subunit beta"/>
    <property type="match status" value="1"/>
</dbReference>
<dbReference type="Gene3D" id="2.130.10.10">
    <property type="entry name" value="YVTN repeat-like/Quinoprotein amine dehydrogenase"/>
    <property type="match status" value="1"/>
</dbReference>
<dbReference type="InterPro" id="IPR020472">
    <property type="entry name" value="G-protein_beta_WD-40_rep"/>
</dbReference>
<dbReference type="InterPro" id="IPR001632">
    <property type="entry name" value="Gprotein_B"/>
</dbReference>
<dbReference type="InterPro" id="IPR016346">
    <property type="entry name" value="Guanine_nucleotide-bd_bsu"/>
</dbReference>
<dbReference type="InterPro" id="IPR015943">
    <property type="entry name" value="WD40/YVTN_repeat-like_dom_sf"/>
</dbReference>
<dbReference type="InterPro" id="IPR019775">
    <property type="entry name" value="WD40_repeat_CS"/>
</dbReference>
<dbReference type="InterPro" id="IPR036322">
    <property type="entry name" value="WD40_repeat_dom_sf"/>
</dbReference>
<dbReference type="InterPro" id="IPR001680">
    <property type="entry name" value="WD40_rpt"/>
</dbReference>
<dbReference type="PANTHER" id="PTHR19850">
    <property type="entry name" value="GUANINE NUCLEOTIDE-BINDING PROTEIN BETA G PROTEIN BETA"/>
    <property type="match status" value="1"/>
</dbReference>
<dbReference type="Pfam" id="PF25391">
    <property type="entry name" value="WD40_Gbeta"/>
    <property type="match status" value="1"/>
</dbReference>
<dbReference type="PIRSF" id="PIRSF002394">
    <property type="entry name" value="GN-bd_beta"/>
    <property type="match status" value="1"/>
</dbReference>
<dbReference type="PRINTS" id="PR00319">
    <property type="entry name" value="GPROTEINB"/>
</dbReference>
<dbReference type="PRINTS" id="PR00320">
    <property type="entry name" value="GPROTEINBRPT"/>
</dbReference>
<dbReference type="SMART" id="SM00320">
    <property type="entry name" value="WD40"/>
    <property type="match status" value="7"/>
</dbReference>
<dbReference type="SUPFAM" id="SSF50978">
    <property type="entry name" value="WD40 repeat-like"/>
    <property type="match status" value="1"/>
</dbReference>
<dbReference type="PROSITE" id="PS00678">
    <property type="entry name" value="WD_REPEATS_1"/>
    <property type="match status" value="2"/>
</dbReference>
<dbReference type="PROSITE" id="PS50082">
    <property type="entry name" value="WD_REPEATS_2"/>
    <property type="match status" value="5"/>
</dbReference>
<dbReference type="PROSITE" id="PS50294">
    <property type="entry name" value="WD_REPEATS_REGION"/>
    <property type="match status" value="1"/>
</dbReference>
<keyword id="KW-1185">Reference proteome</keyword>
<keyword id="KW-0677">Repeat</keyword>
<keyword id="KW-0807">Transducer</keyword>
<keyword id="KW-0853">WD repeat</keyword>
<feature type="chain" id="PRO_0000127728" description="Guanine nucleotide-binding protein subunit beta-2">
    <location>
        <begin position="1"/>
        <end position="377"/>
    </location>
</feature>
<feature type="repeat" description="WD 1">
    <location>
        <begin position="63"/>
        <end position="93"/>
    </location>
</feature>
<feature type="repeat" description="WD 2">
    <location>
        <begin position="105"/>
        <end position="135"/>
    </location>
</feature>
<feature type="repeat" description="WD 3">
    <location>
        <begin position="154"/>
        <end position="185"/>
    </location>
</feature>
<feature type="repeat" description="WD 4">
    <location>
        <begin position="202"/>
        <end position="233"/>
    </location>
</feature>
<feature type="repeat" description="WD 5">
    <location>
        <begin position="246"/>
        <end position="276"/>
    </location>
</feature>
<feature type="repeat" description="WD 6">
    <location>
        <begin position="293"/>
        <end position="323"/>
    </location>
</feature>
<feature type="repeat" description="WD 7">
    <location>
        <begin position="339"/>
        <end position="369"/>
    </location>
</feature>
<organism>
    <name type="scientific">Nicotiana tabacum</name>
    <name type="common">Common tobacco</name>
    <dbReference type="NCBI Taxonomy" id="4097"/>
    <lineage>
        <taxon>Eukaryota</taxon>
        <taxon>Viridiplantae</taxon>
        <taxon>Streptophyta</taxon>
        <taxon>Embryophyta</taxon>
        <taxon>Tracheophyta</taxon>
        <taxon>Spermatophyta</taxon>
        <taxon>Magnoliopsida</taxon>
        <taxon>eudicotyledons</taxon>
        <taxon>Gunneridae</taxon>
        <taxon>Pentapetalae</taxon>
        <taxon>asterids</taxon>
        <taxon>lamiids</taxon>
        <taxon>Solanales</taxon>
        <taxon>Solanaceae</taxon>
        <taxon>Nicotianoideae</taxon>
        <taxon>Nicotianeae</taxon>
        <taxon>Nicotiana</taxon>
    </lineage>
</organism>
<proteinExistence type="evidence at transcript level"/>
<evidence type="ECO:0000305" key="1"/>
<name>GBB2_TOBAC</name>
<comment type="function">
    <text>Guanine nucleotide-binding proteins (G proteins) are involved as a modulator or transducer in various transmembrane signaling systems. The beta and gamma chains are required for the GTPase activity, for replacement of GDP by GTP, and for G protein-effector interaction.</text>
</comment>
<comment type="subunit">
    <text>G proteins are composed of 3 units, alpha, beta and gamma.</text>
</comment>
<comment type="similarity">
    <text evidence="1">Belongs to the WD repeat G protein beta family.</text>
</comment>
<accession>P93398</accession>
<protein>
    <recommendedName>
        <fullName>Guanine nucleotide-binding protein subunit beta-2</fullName>
    </recommendedName>
</protein>